<feature type="chain" id="PRO_1000126735" description="Large ribosomal subunit protein bL31">
    <location>
        <begin position="1"/>
        <end position="70"/>
    </location>
</feature>
<feature type="binding site" evidence="1">
    <location>
        <position position="16"/>
    </location>
    <ligand>
        <name>Zn(2+)</name>
        <dbReference type="ChEBI" id="CHEBI:29105"/>
    </ligand>
</feature>
<feature type="binding site" evidence="1">
    <location>
        <position position="18"/>
    </location>
    <ligand>
        <name>Zn(2+)</name>
        <dbReference type="ChEBI" id="CHEBI:29105"/>
    </ligand>
</feature>
<feature type="binding site" evidence="1">
    <location>
        <position position="37"/>
    </location>
    <ligand>
        <name>Zn(2+)</name>
        <dbReference type="ChEBI" id="CHEBI:29105"/>
    </ligand>
</feature>
<feature type="binding site" evidence="1">
    <location>
        <position position="40"/>
    </location>
    <ligand>
        <name>Zn(2+)</name>
        <dbReference type="ChEBI" id="CHEBI:29105"/>
    </ligand>
</feature>
<accession>A0L1H0</accession>
<sequence>MKPGIHPEYAVITANCTCGNVIKVNSTAGKDLHLDVCGACHPFYTGTQKVVDTGGRIDKFNKRFGMLGKK</sequence>
<dbReference type="EMBL" id="CP000469">
    <property type="protein sequence ID" value="ABK49889.1"/>
    <property type="molecule type" value="Genomic_DNA"/>
</dbReference>
<dbReference type="RefSeq" id="WP_011624224.1">
    <property type="nucleotide sequence ID" value="NC_008577.1"/>
</dbReference>
<dbReference type="SMR" id="A0L1H0"/>
<dbReference type="STRING" id="94122.Shewana3_3670"/>
<dbReference type="GeneID" id="94729589"/>
<dbReference type="KEGG" id="shn:Shewana3_3670"/>
<dbReference type="eggNOG" id="COG0254">
    <property type="taxonomic scope" value="Bacteria"/>
</dbReference>
<dbReference type="HOGENOM" id="CLU_114306_4_3_6"/>
<dbReference type="OrthoDB" id="9803251at2"/>
<dbReference type="Proteomes" id="UP000002589">
    <property type="component" value="Chromosome"/>
</dbReference>
<dbReference type="GO" id="GO:1990904">
    <property type="term" value="C:ribonucleoprotein complex"/>
    <property type="evidence" value="ECO:0007669"/>
    <property type="project" value="UniProtKB-KW"/>
</dbReference>
<dbReference type="GO" id="GO:0005840">
    <property type="term" value="C:ribosome"/>
    <property type="evidence" value="ECO:0007669"/>
    <property type="project" value="UniProtKB-KW"/>
</dbReference>
<dbReference type="GO" id="GO:0046872">
    <property type="term" value="F:metal ion binding"/>
    <property type="evidence" value="ECO:0007669"/>
    <property type="project" value="UniProtKB-KW"/>
</dbReference>
<dbReference type="GO" id="GO:0019843">
    <property type="term" value="F:rRNA binding"/>
    <property type="evidence" value="ECO:0007669"/>
    <property type="project" value="UniProtKB-KW"/>
</dbReference>
<dbReference type="GO" id="GO:0003735">
    <property type="term" value="F:structural constituent of ribosome"/>
    <property type="evidence" value="ECO:0007669"/>
    <property type="project" value="InterPro"/>
</dbReference>
<dbReference type="GO" id="GO:0006412">
    <property type="term" value="P:translation"/>
    <property type="evidence" value="ECO:0007669"/>
    <property type="project" value="UniProtKB-UniRule"/>
</dbReference>
<dbReference type="Gene3D" id="4.10.830.30">
    <property type="entry name" value="Ribosomal protein L31"/>
    <property type="match status" value="1"/>
</dbReference>
<dbReference type="HAMAP" id="MF_00501">
    <property type="entry name" value="Ribosomal_bL31_1"/>
    <property type="match status" value="1"/>
</dbReference>
<dbReference type="InterPro" id="IPR034704">
    <property type="entry name" value="Ribosomal_bL28/bL31-like_sf"/>
</dbReference>
<dbReference type="InterPro" id="IPR002150">
    <property type="entry name" value="Ribosomal_bL31"/>
</dbReference>
<dbReference type="InterPro" id="IPR027491">
    <property type="entry name" value="Ribosomal_bL31_A"/>
</dbReference>
<dbReference type="InterPro" id="IPR042105">
    <property type="entry name" value="Ribosomal_bL31_sf"/>
</dbReference>
<dbReference type="NCBIfam" id="TIGR00105">
    <property type="entry name" value="L31"/>
    <property type="match status" value="1"/>
</dbReference>
<dbReference type="NCBIfam" id="NF000612">
    <property type="entry name" value="PRK00019.1"/>
    <property type="match status" value="1"/>
</dbReference>
<dbReference type="NCBIfam" id="NF001809">
    <property type="entry name" value="PRK00528.1"/>
    <property type="match status" value="1"/>
</dbReference>
<dbReference type="PANTHER" id="PTHR33280">
    <property type="entry name" value="50S RIBOSOMAL PROTEIN L31, CHLOROPLASTIC"/>
    <property type="match status" value="1"/>
</dbReference>
<dbReference type="PANTHER" id="PTHR33280:SF6">
    <property type="entry name" value="LARGE RIBOSOMAL SUBUNIT PROTEIN BL31A"/>
    <property type="match status" value="1"/>
</dbReference>
<dbReference type="Pfam" id="PF01197">
    <property type="entry name" value="Ribosomal_L31"/>
    <property type="match status" value="1"/>
</dbReference>
<dbReference type="PRINTS" id="PR01249">
    <property type="entry name" value="RIBOSOMALL31"/>
</dbReference>
<dbReference type="SUPFAM" id="SSF143800">
    <property type="entry name" value="L28p-like"/>
    <property type="match status" value="1"/>
</dbReference>
<dbReference type="PROSITE" id="PS01143">
    <property type="entry name" value="RIBOSOMAL_L31"/>
    <property type="match status" value="1"/>
</dbReference>
<name>RL31_SHESA</name>
<protein>
    <recommendedName>
        <fullName evidence="1">Large ribosomal subunit protein bL31</fullName>
    </recommendedName>
    <alternativeName>
        <fullName evidence="2">50S ribosomal protein L31</fullName>
    </alternativeName>
</protein>
<evidence type="ECO:0000255" key="1">
    <source>
        <dbReference type="HAMAP-Rule" id="MF_00501"/>
    </source>
</evidence>
<evidence type="ECO:0000305" key="2"/>
<gene>
    <name evidence="1" type="primary">rpmE</name>
    <name type="ordered locus">Shewana3_3670</name>
</gene>
<organism>
    <name type="scientific">Shewanella sp. (strain ANA-3)</name>
    <dbReference type="NCBI Taxonomy" id="94122"/>
    <lineage>
        <taxon>Bacteria</taxon>
        <taxon>Pseudomonadati</taxon>
        <taxon>Pseudomonadota</taxon>
        <taxon>Gammaproteobacteria</taxon>
        <taxon>Alteromonadales</taxon>
        <taxon>Shewanellaceae</taxon>
        <taxon>Shewanella</taxon>
    </lineage>
</organism>
<comment type="function">
    <text evidence="1">Binds the 23S rRNA.</text>
</comment>
<comment type="cofactor">
    <cofactor evidence="1">
        <name>Zn(2+)</name>
        <dbReference type="ChEBI" id="CHEBI:29105"/>
    </cofactor>
    <text evidence="1">Binds 1 zinc ion per subunit.</text>
</comment>
<comment type="subunit">
    <text evidence="1">Part of the 50S ribosomal subunit.</text>
</comment>
<comment type="similarity">
    <text evidence="1">Belongs to the bacterial ribosomal protein bL31 family. Type A subfamily.</text>
</comment>
<keyword id="KW-0479">Metal-binding</keyword>
<keyword id="KW-0687">Ribonucleoprotein</keyword>
<keyword id="KW-0689">Ribosomal protein</keyword>
<keyword id="KW-0694">RNA-binding</keyword>
<keyword id="KW-0699">rRNA-binding</keyword>
<keyword id="KW-0862">Zinc</keyword>
<reference key="1">
    <citation type="submission" date="2006-09" db="EMBL/GenBank/DDBJ databases">
        <title>Complete sequence of chromosome 1 of Shewanella sp. ANA-3.</title>
        <authorList>
            <person name="Copeland A."/>
            <person name="Lucas S."/>
            <person name="Lapidus A."/>
            <person name="Barry K."/>
            <person name="Detter J.C."/>
            <person name="Glavina del Rio T."/>
            <person name="Hammon N."/>
            <person name="Israni S."/>
            <person name="Dalin E."/>
            <person name="Tice H."/>
            <person name="Pitluck S."/>
            <person name="Chertkov O."/>
            <person name="Brettin T."/>
            <person name="Bruce D."/>
            <person name="Han C."/>
            <person name="Tapia R."/>
            <person name="Gilna P."/>
            <person name="Schmutz J."/>
            <person name="Larimer F."/>
            <person name="Land M."/>
            <person name="Hauser L."/>
            <person name="Kyrpides N."/>
            <person name="Kim E."/>
            <person name="Newman D."/>
            <person name="Salticov C."/>
            <person name="Konstantinidis K."/>
            <person name="Klappenback J."/>
            <person name="Tiedje J."/>
            <person name="Richardson P."/>
        </authorList>
    </citation>
    <scope>NUCLEOTIDE SEQUENCE [LARGE SCALE GENOMIC DNA]</scope>
    <source>
        <strain>ANA-3</strain>
    </source>
</reference>
<proteinExistence type="inferred from homology"/>